<evidence type="ECO:0000255" key="1">
    <source>
        <dbReference type="HAMAP-Rule" id="MF_00109"/>
    </source>
</evidence>
<gene>
    <name evidence="1" type="primary">aroK</name>
    <name type="ordered locus">OB2455</name>
</gene>
<comment type="function">
    <text evidence="1">Catalyzes the specific phosphorylation of the 3-hydroxyl group of shikimic acid using ATP as a cosubstrate.</text>
</comment>
<comment type="catalytic activity">
    <reaction evidence="1">
        <text>shikimate + ATP = 3-phosphoshikimate + ADP + H(+)</text>
        <dbReference type="Rhea" id="RHEA:13121"/>
        <dbReference type="ChEBI" id="CHEBI:15378"/>
        <dbReference type="ChEBI" id="CHEBI:30616"/>
        <dbReference type="ChEBI" id="CHEBI:36208"/>
        <dbReference type="ChEBI" id="CHEBI:145989"/>
        <dbReference type="ChEBI" id="CHEBI:456216"/>
        <dbReference type="EC" id="2.7.1.71"/>
    </reaction>
</comment>
<comment type="cofactor">
    <cofactor evidence="1">
        <name>Mg(2+)</name>
        <dbReference type="ChEBI" id="CHEBI:18420"/>
    </cofactor>
    <text evidence="1">Binds 1 Mg(2+) ion per subunit.</text>
</comment>
<comment type="pathway">
    <text evidence="1">Metabolic intermediate biosynthesis; chorismate biosynthesis; chorismate from D-erythrose 4-phosphate and phosphoenolpyruvate: step 5/7.</text>
</comment>
<comment type="subunit">
    <text evidence="1">Monomer.</text>
</comment>
<comment type="subcellular location">
    <subcellularLocation>
        <location evidence="1">Cytoplasm</location>
    </subcellularLocation>
</comment>
<comment type="similarity">
    <text evidence="1">Belongs to the shikimate kinase family.</text>
</comment>
<dbReference type="EC" id="2.7.1.71" evidence="1"/>
<dbReference type="EMBL" id="BA000028">
    <property type="protein sequence ID" value="BAC14411.1"/>
    <property type="molecule type" value="Genomic_DNA"/>
</dbReference>
<dbReference type="RefSeq" id="WP_011066847.1">
    <property type="nucleotide sequence ID" value="NC_004193.1"/>
</dbReference>
<dbReference type="SMR" id="Q8ENM6"/>
<dbReference type="STRING" id="221109.gene:10734706"/>
<dbReference type="KEGG" id="oih:OB2455"/>
<dbReference type="eggNOG" id="COG0703">
    <property type="taxonomic scope" value="Bacteria"/>
</dbReference>
<dbReference type="HOGENOM" id="CLU_057607_2_2_9"/>
<dbReference type="OrthoDB" id="9800332at2"/>
<dbReference type="PhylomeDB" id="Q8ENM6"/>
<dbReference type="UniPathway" id="UPA00053">
    <property type="reaction ID" value="UER00088"/>
</dbReference>
<dbReference type="Proteomes" id="UP000000822">
    <property type="component" value="Chromosome"/>
</dbReference>
<dbReference type="GO" id="GO:0005829">
    <property type="term" value="C:cytosol"/>
    <property type="evidence" value="ECO:0007669"/>
    <property type="project" value="TreeGrafter"/>
</dbReference>
<dbReference type="GO" id="GO:0005524">
    <property type="term" value="F:ATP binding"/>
    <property type="evidence" value="ECO:0007669"/>
    <property type="project" value="UniProtKB-UniRule"/>
</dbReference>
<dbReference type="GO" id="GO:0000287">
    <property type="term" value="F:magnesium ion binding"/>
    <property type="evidence" value="ECO:0007669"/>
    <property type="project" value="UniProtKB-UniRule"/>
</dbReference>
<dbReference type="GO" id="GO:0004765">
    <property type="term" value="F:shikimate kinase activity"/>
    <property type="evidence" value="ECO:0007669"/>
    <property type="project" value="UniProtKB-UniRule"/>
</dbReference>
<dbReference type="GO" id="GO:0008652">
    <property type="term" value="P:amino acid biosynthetic process"/>
    <property type="evidence" value="ECO:0007669"/>
    <property type="project" value="UniProtKB-KW"/>
</dbReference>
<dbReference type="GO" id="GO:0009073">
    <property type="term" value="P:aromatic amino acid family biosynthetic process"/>
    <property type="evidence" value="ECO:0007669"/>
    <property type="project" value="UniProtKB-KW"/>
</dbReference>
<dbReference type="GO" id="GO:0009423">
    <property type="term" value="P:chorismate biosynthetic process"/>
    <property type="evidence" value="ECO:0007669"/>
    <property type="project" value="UniProtKB-UniRule"/>
</dbReference>
<dbReference type="CDD" id="cd00464">
    <property type="entry name" value="SK"/>
    <property type="match status" value="1"/>
</dbReference>
<dbReference type="Gene3D" id="3.40.50.300">
    <property type="entry name" value="P-loop containing nucleotide triphosphate hydrolases"/>
    <property type="match status" value="1"/>
</dbReference>
<dbReference type="HAMAP" id="MF_00109">
    <property type="entry name" value="Shikimate_kinase"/>
    <property type="match status" value="1"/>
</dbReference>
<dbReference type="InterPro" id="IPR027417">
    <property type="entry name" value="P-loop_NTPase"/>
</dbReference>
<dbReference type="InterPro" id="IPR031322">
    <property type="entry name" value="Shikimate/glucono_kinase"/>
</dbReference>
<dbReference type="InterPro" id="IPR000623">
    <property type="entry name" value="Shikimate_kinase/TSH1"/>
</dbReference>
<dbReference type="InterPro" id="IPR023000">
    <property type="entry name" value="Shikimate_kinase_CS"/>
</dbReference>
<dbReference type="PANTHER" id="PTHR21087">
    <property type="entry name" value="SHIKIMATE KINASE"/>
    <property type="match status" value="1"/>
</dbReference>
<dbReference type="PANTHER" id="PTHR21087:SF16">
    <property type="entry name" value="SHIKIMATE KINASE 1, CHLOROPLASTIC"/>
    <property type="match status" value="1"/>
</dbReference>
<dbReference type="Pfam" id="PF01202">
    <property type="entry name" value="SKI"/>
    <property type="match status" value="1"/>
</dbReference>
<dbReference type="PRINTS" id="PR01100">
    <property type="entry name" value="SHIKIMTKNASE"/>
</dbReference>
<dbReference type="SUPFAM" id="SSF52540">
    <property type="entry name" value="P-loop containing nucleoside triphosphate hydrolases"/>
    <property type="match status" value="1"/>
</dbReference>
<dbReference type="PROSITE" id="PS01128">
    <property type="entry name" value="SHIKIMATE_KINASE"/>
    <property type="match status" value="1"/>
</dbReference>
<organism>
    <name type="scientific">Oceanobacillus iheyensis (strain DSM 14371 / CIP 107618 / JCM 11309 / KCTC 3954 / HTE831)</name>
    <dbReference type="NCBI Taxonomy" id="221109"/>
    <lineage>
        <taxon>Bacteria</taxon>
        <taxon>Bacillati</taxon>
        <taxon>Bacillota</taxon>
        <taxon>Bacilli</taxon>
        <taxon>Bacillales</taxon>
        <taxon>Bacillaceae</taxon>
        <taxon>Oceanobacillus</taxon>
    </lineage>
</organism>
<reference key="1">
    <citation type="journal article" date="2002" name="Nucleic Acids Res.">
        <title>Genome sequence of Oceanobacillus iheyensis isolated from the Iheya Ridge and its unexpected adaptive capabilities to extreme environments.</title>
        <authorList>
            <person name="Takami H."/>
            <person name="Takaki Y."/>
            <person name="Uchiyama I."/>
        </authorList>
    </citation>
    <scope>NUCLEOTIDE SEQUENCE [LARGE SCALE GENOMIC DNA]</scope>
    <source>
        <strain>DSM 14371 / CIP 107618 / JCM 11309 / KCTC 3954 / HTE831</strain>
    </source>
</reference>
<keyword id="KW-0028">Amino-acid biosynthesis</keyword>
<keyword id="KW-0057">Aromatic amino acid biosynthesis</keyword>
<keyword id="KW-0067">ATP-binding</keyword>
<keyword id="KW-0963">Cytoplasm</keyword>
<keyword id="KW-0418">Kinase</keyword>
<keyword id="KW-0460">Magnesium</keyword>
<keyword id="KW-0479">Metal-binding</keyword>
<keyword id="KW-0547">Nucleotide-binding</keyword>
<keyword id="KW-1185">Reference proteome</keyword>
<keyword id="KW-0808">Transferase</keyword>
<accession>Q8ENM6</accession>
<feature type="chain" id="PRO_0000192397" description="Shikimate kinase">
    <location>
        <begin position="1"/>
        <end position="183"/>
    </location>
</feature>
<feature type="binding site" evidence="1">
    <location>
        <begin position="18"/>
        <end position="23"/>
    </location>
    <ligand>
        <name>ATP</name>
        <dbReference type="ChEBI" id="CHEBI:30616"/>
    </ligand>
</feature>
<feature type="binding site" evidence="1">
    <location>
        <position position="22"/>
    </location>
    <ligand>
        <name>Mg(2+)</name>
        <dbReference type="ChEBI" id="CHEBI:18420"/>
    </ligand>
</feature>
<feature type="binding site" evidence="1">
    <location>
        <position position="40"/>
    </location>
    <ligand>
        <name>substrate</name>
    </ligand>
</feature>
<feature type="binding site" evidence="1">
    <location>
        <position position="64"/>
    </location>
    <ligand>
        <name>substrate</name>
    </ligand>
</feature>
<feature type="binding site" evidence="1">
    <location>
        <position position="86"/>
    </location>
    <ligand>
        <name>substrate</name>
    </ligand>
</feature>
<feature type="binding site" evidence="1">
    <location>
        <position position="125"/>
    </location>
    <ligand>
        <name>ATP</name>
        <dbReference type="ChEBI" id="CHEBI:30616"/>
    </ligand>
</feature>
<feature type="binding site" evidence="1">
    <location>
        <position position="143"/>
    </location>
    <ligand>
        <name>substrate</name>
    </ligand>
</feature>
<protein>
    <recommendedName>
        <fullName evidence="1">Shikimate kinase</fullName>
        <shortName evidence="1">SK</shortName>
        <ecNumber evidence="1">2.7.1.71</ecNumber>
    </recommendedName>
</protein>
<name>AROK_OCEIH</name>
<sequence length="183" mass="21608">MGKFPLREQSIVLIGFMGVGKTTIGKTVAKKLYRDFIDIDEEIEKRFKMPTKDIFRLYGEKTFRNAEKDIISEICQQRLKVVSLGGGAFLQKEIQEICLNSSIIFYLDLSWDRWKDRIELLMESRPVLQGKTMKEMKQLYEDRKPIYEQHHSRVDTDYHEIEEVADYIAESLKLAWDIYEPTS</sequence>
<proteinExistence type="inferred from homology"/>